<sequence>MTVGIVAQRDNDRAMSLASTLCDRLRATSAAVVVDETTAGALGDHDAWEAAVPDSAPVDEMSACNLVVSIGGDGTFLYAARGAGSTPILGVNLGEVGFLNAIAPEEAVETVVAEVEHIQKTGSARTRAKPRLQASGDNWELSPALNEVVVQGERRGHGGGATVDVYVDDSLYTSGHADGVLVATPTGSTAYNLSERGPLVHPDVAGLIITGMADEMGTPPLVVDVDSEIVVELTDADSGVVVSDGRVRKDVVPPERITVSRAGEPVRLAGPPLDFFTALDKLA</sequence>
<comment type="function">
    <text evidence="1">Involved in the regulation of the intracellular balance of NAD and NADP, and is a key enzyme in the biosynthesis of NADP. Catalyzes specifically the phosphorylation on 2'-hydroxyl of the adenosine moiety of NAD to yield NADP.</text>
</comment>
<comment type="catalytic activity">
    <reaction evidence="1">
        <text>NAD(+) + ATP = ADP + NADP(+) + H(+)</text>
        <dbReference type="Rhea" id="RHEA:18629"/>
        <dbReference type="ChEBI" id="CHEBI:15378"/>
        <dbReference type="ChEBI" id="CHEBI:30616"/>
        <dbReference type="ChEBI" id="CHEBI:57540"/>
        <dbReference type="ChEBI" id="CHEBI:58349"/>
        <dbReference type="ChEBI" id="CHEBI:456216"/>
        <dbReference type="EC" id="2.7.1.23"/>
    </reaction>
</comment>
<comment type="cofactor">
    <cofactor evidence="1">
        <name>a divalent metal cation</name>
        <dbReference type="ChEBI" id="CHEBI:60240"/>
    </cofactor>
</comment>
<comment type="subcellular location">
    <subcellularLocation>
        <location evidence="1">Cytoplasm</location>
    </subcellularLocation>
</comment>
<comment type="similarity">
    <text evidence="1">Belongs to the NAD kinase family.</text>
</comment>
<reference key="1">
    <citation type="journal article" date="2004" name="Genome Res.">
        <title>Genome sequence of Haloarcula marismortui: a halophilic archaeon from the Dead Sea.</title>
        <authorList>
            <person name="Baliga N.S."/>
            <person name="Bonneau R."/>
            <person name="Facciotti M.T."/>
            <person name="Pan M."/>
            <person name="Glusman G."/>
            <person name="Deutsch E.W."/>
            <person name="Shannon P."/>
            <person name="Chiu Y."/>
            <person name="Weng R.S."/>
            <person name="Gan R.R."/>
            <person name="Hung P."/>
            <person name="Date S.V."/>
            <person name="Marcotte E."/>
            <person name="Hood L."/>
            <person name="Ng W.V."/>
        </authorList>
    </citation>
    <scope>NUCLEOTIDE SEQUENCE [LARGE SCALE GENOMIC DNA]</scope>
    <source>
        <strain>ATCC 43049 / DSM 3752 / JCM 8966 / VKM B-1809</strain>
    </source>
</reference>
<evidence type="ECO:0000255" key="1">
    <source>
        <dbReference type="HAMAP-Rule" id="MF_00361"/>
    </source>
</evidence>
<name>NADK_HALMA</name>
<organism>
    <name type="scientific">Haloarcula marismortui (strain ATCC 43049 / DSM 3752 / JCM 8966 / VKM B-1809)</name>
    <name type="common">Halobacterium marismortui</name>
    <dbReference type="NCBI Taxonomy" id="272569"/>
    <lineage>
        <taxon>Archaea</taxon>
        <taxon>Methanobacteriati</taxon>
        <taxon>Methanobacteriota</taxon>
        <taxon>Stenosarchaea group</taxon>
        <taxon>Halobacteria</taxon>
        <taxon>Halobacteriales</taxon>
        <taxon>Haloarculaceae</taxon>
        <taxon>Haloarcula</taxon>
    </lineage>
</organism>
<proteinExistence type="inferred from homology"/>
<dbReference type="EC" id="2.7.1.23" evidence="1"/>
<dbReference type="EMBL" id="AY596297">
    <property type="protein sequence ID" value="AAV48072.1"/>
    <property type="molecule type" value="Genomic_DNA"/>
</dbReference>
<dbReference type="RefSeq" id="WP_011224773.1">
    <property type="nucleotide sequence ID" value="NC_006396.1"/>
</dbReference>
<dbReference type="SMR" id="Q5UXD1"/>
<dbReference type="STRING" id="272569.rrnAC3391"/>
<dbReference type="PaxDb" id="272569-rrnAC3391"/>
<dbReference type="EnsemblBacteria" id="AAV48072">
    <property type="protein sequence ID" value="AAV48072"/>
    <property type="gene ID" value="rrnAC3391"/>
</dbReference>
<dbReference type="GeneID" id="40154177"/>
<dbReference type="KEGG" id="hma:rrnAC3391"/>
<dbReference type="PATRIC" id="fig|272569.17.peg.3909"/>
<dbReference type="eggNOG" id="arCOG01348">
    <property type="taxonomic scope" value="Archaea"/>
</dbReference>
<dbReference type="HOGENOM" id="CLU_008831_0_2_2"/>
<dbReference type="Proteomes" id="UP000001169">
    <property type="component" value="Chromosome I"/>
</dbReference>
<dbReference type="GO" id="GO:0005737">
    <property type="term" value="C:cytoplasm"/>
    <property type="evidence" value="ECO:0007669"/>
    <property type="project" value="UniProtKB-SubCell"/>
</dbReference>
<dbReference type="GO" id="GO:0005524">
    <property type="term" value="F:ATP binding"/>
    <property type="evidence" value="ECO:0007669"/>
    <property type="project" value="UniProtKB-KW"/>
</dbReference>
<dbReference type="GO" id="GO:0046872">
    <property type="term" value="F:metal ion binding"/>
    <property type="evidence" value="ECO:0007669"/>
    <property type="project" value="UniProtKB-UniRule"/>
</dbReference>
<dbReference type="GO" id="GO:0003951">
    <property type="term" value="F:NAD+ kinase activity"/>
    <property type="evidence" value="ECO:0007669"/>
    <property type="project" value="UniProtKB-UniRule"/>
</dbReference>
<dbReference type="GO" id="GO:0019674">
    <property type="term" value="P:NAD metabolic process"/>
    <property type="evidence" value="ECO:0007669"/>
    <property type="project" value="InterPro"/>
</dbReference>
<dbReference type="GO" id="GO:0006741">
    <property type="term" value="P:NADP biosynthetic process"/>
    <property type="evidence" value="ECO:0007669"/>
    <property type="project" value="UniProtKB-UniRule"/>
</dbReference>
<dbReference type="Gene3D" id="3.40.50.10330">
    <property type="entry name" value="Probable inorganic polyphosphate/atp-NAD kinase, domain 1"/>
    <property type="match status" value="1"/>
</dbReference>
<dbReference type="Gene3D" id="2.60.200.30">
    <property type="entry name" value="Probable inorganic polyphosphate/atp-NAD kinase, domain 2"/>
    <property type="match status" value="1"/>
</dbReference>
<dbReference type="HAMAP" id="MF_00361">
    <property type="entry name" value="NAD_kinase"/>
    <property type="match status" value="1"/>
</dbReference>
<dbReference type="InterPro" id="IPR017438">
    <property type="entry name" value="ATP-NAD_kinase_N"/>
</dbReference>
<dbReference type="InterPro" id="IPR017437">
    <property type="entry name" value="ATP-NAD_kinase_PpnK-typ_C"/>
</dbReference>
<dbReference type="InterPro" id="IPR016064">
    <property type="entry name" value="NAD/diacylglycerol_kinase_sf"/>
</dbReference>
<dbReference type="InterPro" id="IPR002504">
    <property type="entry name" value="NADK"/>
</dbReference>
<dbReference type="PANTHER" id="PTHR20275:SF43">
    <property type="entry name" value="BIFUNCTIONAL NADP PHOSPHATASE_NAD KINASE"/>
    <property type="match status" value="1"/>
</dbReference>
<dbReference type="PANTHER" id="PTHR20275">
    <property type="entry name" value="NAD KINASE"/>
    <property type="match status" value="1"/>
</dbReference>
<dbReference type="Pfam" id="PF01513">
    <property type="entry name" value="NAD_kinase"/>
    <property type="match status" value="1"/>
</dbReference>
<dbReference type="Pfam" id="PF20143">
    <property type="entry name" value="NAD_kinase_C"/>
    <property type="match status" value="1"/>
</dbReference>
<dbReference type="SUPFAM" id="SSF111331">
    <property type="entry name" value="NAD kinase/diacylglycerol kinase-like"/>
    <property type="match status" value="1"/>
</dbReference>
<protein>
    <recommendedName>
        <fullName evidence="1">NAD kinase</fullName>
        <ecNumber evidence="1">2.7.1.23</ecNumber>
    </recommendedName>
    <alternativeName>
        <fullName evidence="1">ATP-dependent NAD kinase</fullName>
    </alternativeName>
</protein>
<keyword id="KW-0067">ATP-binding</keyword>
<keyword id="KW-0963">Cytoplasm</keyword>
<keyword id="KW-0418">Kinase</keyword>
<keyword id="KW-0520">NAD</keyword>
<keyword id="KW-0521">NADP</keyword>
<keyword id="KW-0547">Nucleotide-binding</keyword>
<keyword id="KW-1185">Reference proteome</keyword>
<keyword id="KW-0808">Transferase</keyword>
<accession>Q5UXD1</accession>
<feature type="chain" id="PRO_0000229717" description="NAD kinase">
    <location>
        <begin position="1"/>
        <end position="283"/>
    </location>
</feature>
<feature type="active site" description="Proton acceptor" evidence="1">
    <location>
        <position position="73"/>
    </location>
</feature>
<feature type="binding site" evidence="1">
    <location>
        <begin position="73"/>
        <end position="74"/>
    </location>
    <ligand>
        <name>NAD(+)</name>
        <dbReference type="ChEBI" id="CHEBI:57540"/>
    </ligand>
</feature>
<feature type="binding site" evidence="1">
    <location>
        <begin position="146"/>
        <end position="147"/>
    </location>
    <ligand>
        <name>NAD(+)</name>
        <dbReference type="ChEBI" id="CHEBI:57540"/>
    </ligand>
</feature>
<feature type="binding site" evidence="1">
    <location>
        <position position="157"/>
    </location>
    <ligand>
        <name>NAD(+)</name>
        <dbReference type="ChEBI" id="CHEBI:57540"/>
    </ligand>
</feature>
<feature type="binding site" evidence="1">
    <location>
        <position position="176"/>
    </location>
    <ligand>
        <name>NAD(+)</name>
        <dbReference type="ChEBI" id="CHEBI:57540"/>
    </ligand>
</feature>
<feature type="binding site" evidence="1">
    <location>
        <position position="178"/>
    </location>
    <ligand>
        <name>NAD(+)</name>
        <dbReference type="ChEBI" id="CHEBI:57540"/>
    </ligand>
</feature>
<feature type="binding site" evidence="1">
    <location>
        <begin position="189"/>
        <end position="194"/>
    </location>
    <ligand>
        <name>NAD(+)</name>
        <dbReference type="ChEBI" id="CHEBI:57540"/>
    </ligand>
</feature>
<feature type="binding site" evidence="1">
    <location>
        <position position="213"/>
    </location>
    <ligand>
        <name>NAD(+)</name>
        <dbReference type="ChEBI" id="CHEBI:57540"/>
    </ligand>
</feature>
<gene>
    <name evidence="1" type="primary">nadK</name>
    <name type="ordered locus">rrnAC3391</name>
</gene>